<feature type="chain" id="PRO_0000191237" description="Uncharacterized protein Mb2686">
    <location>
        <begin position="1"/>
        <end position="252"/>
    </location>
</feature>
<feature type="domain" description="Clp R" evidence="1">
    <location>
        <begin position="96"/>
        <end position="238"/>
    </location>
</feature>
<feature type="region of interest" description="Repeat 1" evidence="1">
    <location>
        <begin position="99"/>
        <end position="164"/>
    </location>
</feature>
<feature type="region of interest" description="Repeat 2" evidence="1">
    <location>
        <begin position="172"/>
        <end position="238"/>
    </location>
</feature>
<evidence type="ECO:0000255" key="1">
    <source>
        <dbReference type="PROSITE-ProRule" id="PRU01251"/>
    </source>
</evidence>
<evidence type="ECO:0000305" key="2"/>
<name>Y2686_MYCBO</name>
<proteinExistence type="inferred from homology"/>
<protein>
    <recommendedName>
        <fullName>Uncharacterized protein Mb2686</fullName>
    </recommendedName>
</protein>
<accession>P0A525</accession>
<accession>A0A1R3Y1U3</accession>
<accession>P71964</accession>
<accession>X2BLH2</accession>
<dbReference type="EMBL" id="LT708304">
    <property type="protein sequence ID" value="SIU01304.1"/>
    <property type="molecule type" value="Genomic_DNA"/>
</dbReference>
<dbReference type="RefSeq" id="NP_856332.1">
    <property type="nucleotide sequence ID" value="NC_002945.3"/>
</dbReference>
<dbReference type="RefSeq" id="WP_003413845.1">
    <property type="nucleotide sequence ID" value="NC_002945.4"/>
</dbReference>
<dbReference type="SMR" id="P0A525"/>
<dbReference type="KEGG" id="mbo:BQ2027_MB2686"/>
<dbReference type="PATRIC" id="fig|233413.5.peg.2945"/>
<dbReference type="Proteomes" id="UP000001419">
    <property type="component" value="Chromosome"/>
</dbReference>
<dbReference type="Gene3D" id="1.10.1780.10">
    <property type="entry name" value="Clp, N-terminal domain"/>
    <property type="match status" value="1"/>
</dbReference>
<dbReference type="InterPro" id="IPR036628">
    <property type="entry name" value="Clp_N_dom_sf"/>
</dbReference>
<dbReference type="InterPro" id="IPR004176">
    <property type="entry name" value="Clp_R_dom"/>
</dbReference>
<dbReference type="Pfam" id="PF02861">
    <property type="entry name" value="Clp_N"/>
    <property type="match status" value="2"/>
</dbReference>
<dbReference type="SUPFAM" id="SSF81923">
    <property type="entry name" value="Double Clp-N motif"/>
    <property type="match status" value="1"/>
</dbReference>
<dbReference type="PROSITE" id="PS51903">
    <property type="entry name" value="CLP_R"/>
    <property type="match status" value="1"/>
</dbReference>
<organism>
    <name type="scientific">Mycobacterium bovis (strain ATCC BAA-935 / AF2122/97)</name>
    <dbReference type="NCBI Taxonomy" id="233413"/>
    <lineage>
        <taxon>Bacteria</taxon>
        <taxon>Bacillati</taxon>
        <taxon>Actinomycetota</taxon>
        <taxon>Actinomycetes</taxon>
        <taxon>Mycobacteriales</taxon>
        <taxon>Mycobacteriaceae</taxon>
        <taxon>Mycobacterium</taxon>
        <taxon>Mycobacterium tuberculosis complex</taxon>
    </lineage>
</organism>
<gene>
    <name type="ordered locus">BQ2027_MB2686</name>
</gene>
<reference key="1">
    <citation type="journal article" date="2003" name="Proc. Natl. Acad. Sci. U.S.A.">
        <title>The complete genome sequence of Mycobacterium bovis.</title>
        <authorList>
            <person name="Garnier T."/>
            <person name="Eiglmeier K."/>
            <person name="Camus J.-C."/>
            <person name="Medina N."/>
            <person name="Mansoor H."/>
            <person name="Pryor M."/>
            <person name="Duthoy S."/>
            <person name="Grondin S."/>
            <person name="Lacroix C."/>
            <person name="Monsempe C."/>
            <person name="Simon S."/>
            <person name="Harris B."/>
            <person name="Atkin R."/>
            <person name="Doggett J."/>
            <person name="Mayes R."/>
            <person name="Keating L."/>
            <person name="Wheeler P.R."/>
            <person name="Parkhill J."/>
            <person name="Barrell B.G."/>
            <person name="Cole S.T."/>
            <person name="Gordon S.V."/>
            <person name="Hewinson R.G."/>
        </authorList>
    </citation>
    <scope>NUCLEOTIDE SEQUENCE [LARGE SCALE GENOMIC DNA]</scope>
    <source>
        <strain>ATCC BAA-935 / AF2122/97</strain>
    </source>
</reference>
<reference key="2">
    <citation type="journal article" date="2017" name="Genome Announc.">
        <title>Updated reference genome sequence and annotation of Mycobacterium bovis AF2122/97.</title>
        <authorList>
            <person name="Malone K.M."/>
            <person name="Farrell D."/>
            <person name="Stuber T.P."/>
            <person name="Schubert O.T."/>
            <person name="Aebersold R."/>
            <person name="Robbe-Austerman S."/>
            <person name="Gordon S.V."/>
        </authorList>
    </citation>
    <scope>NUCLEOTIDE SEQUENCE [LARGE SCALE GENOMIC DNA]</scope>
    <scope>GENOME REANNOTATION</scope>
    <source>
        <strain>ATCC BAA-935 / AF2122/97</strain>
    </source>
</reference>
<keyword id="KW-1185">Reference proteome</keyword>
<keyword id="KW-0677">Repeat</keyword>
<comment type="similarity">
    <text evidence="2">Belongs to the ClpA/ClpB family. ClpC subfamily.</text>
</comment>
<sequence>MPEPTPTAYPVRLDELINAIKRVHSDVLDQLSDAVLAAEHLGEIADHLIGHFVDQARRSGASWSDIGKSMGVTKQAAQKRFVPRAEATTLDSNQGFRRFTPRARNAVVAAQNAAHGAASSEITPDHLLLGVLTDPAALATALLQQQEIDIATLRTAVTLPPAVTEPPQPIPFSGPARKVLELTFREALRLGHNYIGTEHLLLALLELEDGDGPLHRSGVDKSRAEADLITTLASLTGANAAGATDAGATDAG</sequence>